<sequence length="314" mass="35500">MKKKIAEYEVGEQVDVFLLIKTATKGIASNGKPFLTVILQDPSGDIEAKLWDVSPEVEKQYVAETIVKVAGDILNYKGRIQLRVKQIRVANENEVTDISDFVEKAPVKKEDMVEKITQYIFEMRNPNIQRLTRHLLNKHQNEFLDYPAATKNHHEFVSGLAYHVVSMLDLAKAISNLYPSLDKDLLYAGVILHDLGKVIELSGPISTTYTLEGNLLGHISIMVNEIGKAADELQIDAEEVLILQHIVLSHHGKAEWGSPKPPLVKEAEILHYIDNLDAKMNMMDRALGRTKPGEYTERVFALDNRSFYKPSFHN</sequence>
<evidence type="ECO:0000255" key="1">
    <source>
        <dbReference type="HAMAP-Rule" id="MF_01427"/>
    </source>
</evidence>
<evidence type="ECO:0000255" key="2">
    <source>
        <dbReference type="PROSITE-ProRule" id="PRU01175"/>
    </source>
</evidence>
<accession>Q81U72</accession>
<accession>Q6I2F9</accession>
<accession>Q6KW86</accession>
<keyword id="KW-0238">DNA-binding</keyword>
<keyword id="KW-0269">Exonuclease</keyword>
<keyword id="KW-0378">Hydrolase</keyword>
<keyword id="KW-0540">Nuclease</keyword>
<keyword id="KW-1185">Reference proteome</keyword>
<reference key="1">
    <citation type="journal article" date="2003" name="Nature">
        <title>The genome sequence of Bacillus anthracis Ames and comparison to closely related bacteria.</title>
        <authorList>
            <person name="Read T.D."/>
            <person name="Peterson S.N."/>
            <person name="Tourasse N.J."/>
            <person name="Baillie L.W."/>
            <person name="Paulsen I.T."/>
            <person name="Nelson K.E."/>
            <person name="Tettelin H."/>
            <person name="Fouts D.E."/>
            <person name="Eisen J.A."/>
            <person name="Gill S.R."/>
            <person name="Holtzapple E.K."/>
            <person name="Okstad O.A."/>
            <person name="Helgason E."/>
            <person name="Rilstone J."/>
            <person name="Wu M."/>
            <person name="Kolonay J.F."/>
            <person name="Beanan M.J."/>
            <person name="Dodson R.J."/>
            <person name="Brinkac L.M."/>
            <person name="Gwinn M.L."/>
            <person name="DeBoy R.T."/>
            <person name="Madpu R."/>
            <person name="Daugherty S.C."/>
            <person name="Durkin A.S."/>
            <person name="Haft D.H."/>
            <person name="Nelson W.C."/>
            <person name="Peterson J.D."/>
            <person name="Pop M."/>
            <person name="Khouri H.M."/>
            <person name="Radune D."/>
            <person name="Benton J.L."/>
            <person name="Mahamoud Y."/>
            <person name="Jiang L."/>
            <person name="Hance I.R."/>
            <person name="Weidman J.F."/>
            <person name="Berry K.J."/>
            <person name="Plaut R.D."/>
            <person name="Wolf A.M."/>
            <person name="Watkins K.L."/>
            <person name="Nierman W.C."/>
            <person name="Hazen A."/>
            <person name="Cline R.T."/>
            <person name="Redmond C."/>
            <person name="Thwaite J.E."/>
            <person name="White O."/>
            <person name="Salzberg S.L."/>
            <person name="Thomason B."/>
            <person name="Friedlander A.M."/>
            <person name="Koehler T.M."/>
            <person name="Hanna P.C."/>
            <person name="Kolstoe A.-B."/>
            <person name="Fraser C.M."/>
        </authorList>
    </citation>
    <scope>NUCLEOTIDE SEQUENCE [LARGE SCALE GENOMIC DNA]</scope>
    <source>
        <strain>Ames / isolate Porton</strain>
    </source>
</reference>
<reference key="2">
    <citation type="journal article" date="2009" name="J. Bacteriol.">
        <title>The complete genome sequence of Bacillus anthracis Ames 'Ancestor'.</title>
        <authorList>
            <person name="Ravel J."/>
            <person name="Jiang L."/>
            <person name="Stanley S.T."/>
            <person name="Wilson M.R."/>
            <person name="Decker R.S."/>
            <person name="Read T.D."/>
            <person name="Worsham P."/>
            <person name="Keim P.S."/>
            <person name="Salzberg S.L."/>
            <person name="Fraser-Liggett C.M."/>
            <person name="Rasko D.A."/>
        </authorList>
    </citation>
    <scope>NUCLEOTIDE SEQUENCE [LARGE SCALE GENOMIC DNA]</scope>
    <source>
        <strain>Ames ancestor</strain>
    </source>
</reference>
<reference key="3">
    <citation type="submission" date="2004-01" db="EMBL/GenBank/DDBJ databases">
        <title>Complete genome sequence of Bacillus anthracis Sterne.</title>
        <authorList>
            <person name="Brettin T.S."/>
            <person name="Bruce D."/>
            <person name="Challacombe J.F."/>
            <person name="Gilna P."/>
            <person name="Han C."/>
            <person name="Hill K."/>
            <person name="Hitchcock P."/>
            <person name="Jackson P."/>
            <person name="Keim P."/>
            <person name="Longmire J."/>
            <person name="Lucas S."/>
            <person name="Okinaka R."/>
            <person name="Richardson P."/>
            <person name="Rubin E."/>
            <person name="Tice H."/>
        </authorList>
    </citation>
    <scope>NUCLEOTIDE SEQUENCE [LARGE SCALE GENOMIC DNA]</scope>
    <source>
        <strain>Sterne</strain>
    </source>
</reference>
<protein>
    <recommendedName>
        <fullName evidence="1">3'-5' exoribonuclease YhaM</fullName>
        <ecNumber evidence="1">3.1.-.-</ecNumber>
    </recommendedName>
</protein>
<organism>
    <name type="scientific">Bacillus anthracis</name>
    <dbReference type="NCBI Taxonomy" id="1392"/>
    <lineage>
        <taxon>Bacteria</taxon>
        <taxon>Bacillati</taxon>
        <taxon>Bacillota</taxon>
        <taxon>Bacilli</taxon>
        <taxon>Bacillales</taxon>
        <taxon>Bacillaceae</taxon>
        <taxon>Bacillus</taxon>
        <taxon>Bacillus cereus group</taxon>
    </lineage>
</organism>
<feature type="chain" id="PRO_0000109853" description="3'-5' exoribonuclease YhaM">
    <location>
        <begin position="1"/>
        <end position="314"/>
    </location>
</feature>
<feature type="domain" description="HD" evidence="2">
    <location>
        <begin position="163"/>
        <end position="279"/>
    </location>
</feature>
<feature type="DNA-binding region" description="OB">
    <location>
        <begin position="14"/>
        <end position="90"/>
    </location>
</feature>
<proteinExistence type="inferred from homology"/>
<dbReference type="EC" id="3.1.-.-" evidence="1"/>
<dbReference type="EMBL" id="AE016879">
    <property type="protein sequence ID" value="AAP24999.1"/>
    <property type="molecule type" value="Genomic_DNA"/>
</dbReference>
<dbReference type="EMBL" id="AE017334">
    <property type="protein sequence ID" value="AAT30115.1"/>
    <property type="molecule type" value="Genomic_DNA"/>
</dbReference>
<dbReference type="EMBL" id="AE017225">
    <property type="protein sequence ID" value="AAT53272.1"/>
    <property type="molecule type" value="Genomic_DNA"/>
</dbReference>
<dbReference type="RefSeq" id="NP_843513.1">
    <property type="nucleotide sequence ID" value="NC_003997.3"/>
</dbReference>
<dbReference type="RefSeq" id="WP_000726642.1">
    <property type="nucleotide sequence ID" value="NZ_WXXJ01000044.1"/>
</dbReference>
<dbReference type="RefSeq" id="YP_027221.1">
    <property type="nucleotide sequence ID" value="NC_005945.1"/>
</dbReference>
<dbReference type="SMR" id="Q81U72"/>
<dbReference type="STRING" id="261594.GBAA_1012"/>
<dbReference type="DNASU" id="1088945"/>
<dbReference type="GeneID" id="75084326"/>
<dbReference type="KEGG" id="ban:BA_1012"/>
<dbReference type="KEGG" id="banh:HYU01_05360"/>
<dbReference type="KEGG" id="bar:GBAA_1012"/>
<dbReference type="KEGG" id="bat:BAS0947"/>
<dbReference type="PATRIC" id="fig|198094.11.peg.1003"/>
<dbReference type="eggNOG" id="COG3481">
    <property type="taxonomic scope" value="Bacteria"/>
</dbReference>
<dbReference type="HOGENOM" id="CLU_056349_2_0_9"/>
<dbReference type="OMA" id="NLVGHLV"/>
<dbReference type="OrthoDB" id="9778453at2"/>
<dbReference type="Proteomes" id="UP000000427">
    <property type="component" value="Chromosome"/>
</dbReference>
<dbReference type="Proteomes" id="UP000000594">
    <property type="component" value="Chromosome"/>
</dbReference>
<dbReference type="GO" id="GO:0000175">
    <property type="term" value="F:3'-5'-RNA exonuclease activity"/>
    <property type="evidence" value="ECO:0007669"/>
    <property type="project" value="UniProtKB-UniRule"/>
</dbReference>
<dbReference type="GO" id="GO:0003677">
    <property type="term" value="F:DNA binding"/>
    <property type="evidence" value="ECO:0007669"/>
    <property type="project" value="UniProtKB-KW"/>
</dbReference>
<dbReference type="GO" id="GO:0031125">
    <property type="term" value="P:rRNA 3'-end processing"/>
    <property type="evidence" value="ECO:0007669"/>
    <property type="project" value="TreeGrafter"/>
</dbReference>
<dbReference type="CDD" id="cd00077">
    <property type="entry name" value="HDc"/>
    <property type="match status" value="1"/>
</dbReference>
<dbReference type="CDD" id="cd04492">
    <property type="entry name" value="YhaM_OBF_like"/>
    <property type="match status" value="1"/>
</dbReference>
<dbReference type="FunFam" id="1.10.3210.10:FF:000008">
    <property type="entry name" value="3'-5' exoribonuclease YhaM"/>
    <property type="match status" value="1"/>
</dbReference>
<dbReference type="Gene3D" id="1.10.3210.10">
    <property type="entry name" value="Hypothetical protein af1432"/>
    <property type="match status" value="1"/>
</dbReference>
<dbReference type="Gene3D" id="2.40.50.140">
    <property type="entry name" value="Nucleic acid-binding proteins"/>
    <property type="match status" value="1"/>
</dbReference>
<dbReference type="HAMAP" id="MF_01427">
    <property type="entry name" value="3_5_Exoribonuc_YhaM"/>
    <property type="match status" value="1"/>
</dbReference>
<dbReference type="InterPro" id="IPR020873">
    <property type="entry name" value="3'-5'_exoribonuclease_YhaM"/>
</dbReference>
<dbReference type="InterPro" id="IPR003607">
    <property type="entry name" value="HD/PDEase_dom"/>
</dbReference>
<dbReference type="InterPro" id="IPR006674">
    <property type="entry name" value="HD_domain"/>
</dbReference>
<dbReference type="InterPro" id="IPR012340">
    <property type="entry name" value="NA-bd_OB-fold"/>
</dbReference>
<dbReference type="InterPro" id="IPR004365">
    <property type="entry name" value="NA-bd_OB_tRNA"/>
</dbReference>
<dbReference type="InterPro" id="IPR050798">
    <property type="entry name" value="YhaM_exoribonuc/phosphodiest"/>
</dbReference>
<dbReference type="NCBIfam" id="NF010007">
    <property type="entry name" value="PRK13480.1"/>
    <property type="match status" value="1"/>
</dbReference>
<dbReference type="PANTHER" id="PTHR37294">
    <property type="entry name" value="3'-5' EXORIBONUCLEASE YHAM"/>
    <property type="match status" value="1"/>
</dbReference>
<dbReference type="PANTHER" id="PTHR37294:SF1">
    <property type="entry name" value="3'-5' EXORIBONUCLEASE YHAM"/>
    <property type="match status" value="1"/>
</dbReference>
<dbReference type="Pfam" id="PF01966">
    <property type="entry name" value="HD"/>
    <property type="match status" value="1"/>
</dbReference>
<dbReference type="Pfam" id="PF01336">
    <property type="entry name" value="tRNA_anti-codon"/>
    <property type="match status" value="1"/>
</dbReference>
<dbReference type="SMART" id="SM00471">
    <property type="entry name" value="HDc"/>
    <property type="match status" value="1"/>
</dbReference>
<dbReference type="SUPFAM" id="SSF109604">
    <property type="entry name" value="HD-domain/PDEase-like"/>
    <property type="match status" value="1"/>
</dbReference>
<dbReference type="SUPFAM" id="SSF50249">
    <property type="entry name" value="Nucleic acid-binding proteins"/>
    <property type="match status" value="1"/>
</dbReference>
<dbReference type="PROSITE" id="PS51831">
    <property type="entry name" value="HD"/>
    <property type="match status" value="1"/>
</dbReference>
<gene>
    <name evidence="1" type="primary">yhaM</name>
    <name type="ordered locus">BA_1012</name>
    <name type="ordered locus">GBAA_1012</name>
    <name type="ordered locus">BAS0947</name>
</gene>
<name>YHAM_BACAN</name>
<comment type="function">
    <text evidence="1">Shows a 3'-5' exoribonuclease activity.</text>
</comment>
<comment type="similarity">
    <text evidence="1">Belongs to the YhaM family.</text>
</comment>